<accession>Q95R14</accession>
<comment type="function">
    <text evidence="4">Recruited co-dependently with zhp-2 to the synaptonemal complex between homologous chromosome pairs to regulate the formation and number of crossover events between homologs during meiotic recombination (PubMed:29521627). Together with zhp-2, promotes the accumulation of pro-crossover proteins, including zhp-3 and zhp-4, at a designated crossover site along the recombination intermediate (PubMed:29521627). Limits the number of crossover sites along a recombination intermediate by restricting the association of these pro-crossover proteins with other recombination sites during late prophase (PubMed:29521627). Also, together with zhp-2, plays a role in chromosome remodeling following crossover formation to promote two successive rounds of chromosome segregation during meiosis (PubMed:29521627).</text>
</comment>
<comment type="subunit">
    <text evidence="4">Interacts with zhp-2; the interaction is required for their chromosome association and stability.</text>
</comment>
<comment type="interaction">
    <interactant intactId="EBI-2415375">
        <id>Q95R14</id>
    </interactant>
    <interactant intactId="EBI-2415382">
        <id>Q9U3L0</id>
        <label>zhp-2</label>
    </interactant>
    <organismsDiffer>false</organismsDiffer>
    <experiments>3</experiments>
</comment>
<comment type="subcellular location">
    <subcellularLocation>
        <location evidence="4">Chromosome</location>
    </subcellularLocation>
    <text evidence="4">In association with zhp-2, localizes to chromosomes from pachytene to early diakinesis in the germ line (PubMed:29521627). Co-localizes with syp-1, a component of the synaptonemal complex from early prophase to mid-pachytene (PubMed:29521627). From mid-pachytene to diplotene, co-localizes with syp-1 on one side of each crossover site (PubMed:29521627). Remains co-localized with syp-1 along the short arm of homologous chromosomes through to late diakinesis (PubMed:29521627). At late pachytene, localization at chromosomes is not dependent on syp-1 (PubMed:29521627).</text>
</comment>
<comment type="tissue specificity">
    <text evidence="4">Expressed in the germline.</text>
</comment>
<reference evidence="6" key="1">
    <citation type="journal article" date="1998" name="Science">
        <title>Genome sequence of the nematode C. elegans: a platform for investigating biology.</title>
        <authorList>
            <consortium name="The C. elegans sequencing consortium"/>
        </authorList>
    </citation>
    <scope>NUCLEOTIDE SEQUENCE [LARGE SCALE GENOMIC DNA]</scope>
    <source>
        <strain evidence="6">Bristol N2</strain>
    </source>
</reference>
<reference evidence="5" key="2">
    <citation type="journal article" date="2018" name="Elife">
        <title>A compartmentalized signaling network mediates crossover control in meiosis.</title>
        <authorList>
            <person name="Zhang L."/>
            <person name="Koehler S."/>
            <person name="Rillo-Bohn R."/>
            <person name="Dernburg A.F."/>
        </authorList>
    </citation>
    <scope>FUNCTION</scope>
    <scope>INTERACTION WITH ZHP-2</scope>
    <scope>SUBCELLULAR LOCATION</scope>
    <scope>TISSUE SPECIFICITY</scope>
</reference>
<protein>
    <recommendedName>
        <fullName evidence="7">Zip homologous protein 1</fullName>
    </recommendedName>
</protein>
<dbReference type="EMBL" id="BX284601">
    <property type="protein sequence ID" value="CCD65448.1"/>
    <property type="molecule type" value="Genomic_DNA"/>
</dbReference>
<dbReference type="RefSeq" id="NP_491578.1">
    <property type="nucleotide sequence ID" value="NM_059177.6"/>
</dbReference>
<dbReference type="ComplexPortal" id="CPX-5801">
    <property type="entry name" value="ZHP-1-ZHP-2 complex"/>
</dbReference>
<dbReference type="FunCoup" id="Q95R14">
    <property type="interactions" value="4"/>
</dbReference>
<dbReference type="IntAct" id="Q95R14">
    <property type="interactions" value="2"/>
</dbReference>
<dbReference type="STRING" id="6239.F55A12.10.1"/>
<dbReference type="PaxDb" id="6239-F55A12.10"/>
<dbReference type="EnsemblMetazoa" id="F55A12.10.1">
    <property type="protein sequence ID" value="F55A12.10.1"/>
    <property type="gene ID" value="WBGene00018867"/>
</dbReference>
<dbReference type="EnsemblMetazoa" id="F55A12.10.2">
    <property type="protein sequence ID" value="F55A12.10.2"/>
    <property type="gene ID" value="WBGene00018867"/>
</dbReference>
<dbReference type="GeneID" id="172186"/>
<dbReference type="KEGG" id="cel:CELE_F55A12.10"/>
<dbReference type="UCSC" id="F55A12.10">
    <property type="organism name" value="c. elegans"/>
</dbReference>
<dbReference type="AGR" id="WB:WBGene00018867"/>
<dbReference type="CTD" id="172186"/>
<dbReference type="WormBase" id="F55A12.10">
    <property type="protein sequence ID" value="CE28451"/>
    <property type="gene ID" value="WBGene00018867"/>
    <property type="gene designation" value="zhp-1"/>
</dbReference>
<dbReference type="eggNOG" id="KOG4739">
    <property type="taxonomic scope" value="Eukaryota"/>
</dbReference>
<dbReference type="GeneTree" id="ENSGT00740000115581"/>
<dbReference type="HOGENOM" id="CLU_1251651_0_0_1"/>
<dbReference type="InParanoid" id="Q95R14"/>
<dbReference type="OMA" id="HCNNCFS"/>
<dbReference type="OrthoDB" id="2535391at2759"/>
<dbReference type="PhylomeDB" id="Q95R14"/>
<dbReference type="PRO" id="PR:Q95R14"/>
<dbReference type="Proteomes" id="UP000001940">
    <property type="component" value="Chromosome I"/>
</dbReference>
<dbReference type="Bgee" id="WBGene00018867">
    <property type="expression patterns" value="Expressed in germ line (C elegans) and 3 other cell types or tissues"/>
</dbReference>
<dbReference type="GO" id="GO:0005694">
    <property type="term" value="C:chromosome"/>
    <property type="evidence" value="ECO:0000303"/>
    <property type="project" value="ComplexPortal"/>
</dbReference>
<dbReference type="GO" id="GO:0000795">
    <property type="term" value="C:synaptonemal complex"/>
    <property type="evidence" value="ECO:0000318"/>
    <property type="project" value="GO_Central"/>
</dbReference>
<dbReference type="GO" id="GO:0019789">
    <property type="term" value="F:SUMO transferase activity"/>
    <property type="evidence" value="ECO:0000318"/>
    <property type="project" value="GO_Central"/>
</dbReference>
<dbReference type="GO" id="GO:0008270">
    <property type="term" value="F:zinc ion binding"/>
    <property type="evidence" value="ECO:0007669"/>
    <property type="project" value="UniProtKB-KW"/>
</dbReference>
<dbReference type="GO" id="GO:0007129">
    <property type="term" value="P:homologous chromosome pairing at meiosis"/>
    <property type="evidence" value="ECO:0000318"/>
    <property type="project" value="GO_Central"/>
</dbReference>
<dbReference type="GO" id="GO:0007131">
    <property type="term" value="P:reciprocal meiotic recombination"/>
    <property type="evidence" value="ECO:0000303"/>
    <property type="project" value="ComplexPortal"/>
</dbReference>
<dbReference type="InterPro" id="IPR042123">
    <property type="entry name" value="Zip3/RNF212-like"/>
</dbReference>
<dbReference type="InterPro" id="IPR001841">
    <property type="entry name" value="Znf_RING"/>
</dbReference>
<dbReference type="PANTHER" id="PTHR22663">
    <property type="entry name" value="RING FINGER PROTEIN NARYA-RELATED"/>
    <property type="match status" value="1"/>
</dbReference>
<dbReference type="PANTHER" id="PTHR22663:SF17">
    <property type="entry name" value="RING FINGER PROTEIN NARYA-RELATED"/>
    <property type="match status" value="1"/>
</dbReference>
<dbReference type="Pfam" id="PF14634">
    <property type="entry name" value="zf-RING_5"/>
    <property type="match status" value="1"/>
</dbReference>
<sequence length="220" mass="24839">MEFIVCNGCGCSPSKRQFFITACSHVFCETCRTTPTADFCHLCKIPTKTLKMDASLPKNVKKMFGDVGVMSTDIHKRLARVIGFQKIQKSIQLKMENKKSVMRKEQTKKVEKKTEEMHCQLSKLTSFEENNRKKLEDIERENEKLRNLISALELKVASSRDIDDDEFFMQGTPTSSNPSVAGSDVDNDELLDYDLLGLRNRSDSSSSNCSSQSNRGGSLF</sequence>
<feature type="chain" id="PRO_0000450695" description="Zip homologous protein 1">
    <location>
        <begin position="1"/>
        <end position="220"/>
    </location>
</feature>
<feature type="zinc finger region" description="RING-type" evidence="2">
    <location>
        <begin position="6"/>
        <end position="44"/>
    </location>
</feature>
<feature type="region of interest" description="Disordered" evidence="3">
    <location>
        <begin position="166"/>
        <end position="186"/>
    </location>
</feature>
<feature type="region of interest" description="Disordered" evidence="3">
    <location>
        <begin position="201"/>
        <end position="220"/>
    </location>
</feature>
<feature type="coiled-coil region" evidence="1">
    <location>
        <begin position="124"/>
        <end position="155"/>
    </location>
</feature>
<feature type="compositionally biased region" description="Polar residues" evidence="3">
    <location>
        <begin position="171"/>
        <end position="180"/>
    </location>
</feature>
<name>ZHP1_CAEEL</name>
<proteinExistence type="evidence at protein level"/>
<gene>
    <name evidence="7" type="primary">zhp-1</name>
    <name evidence="7" type="ORF">F55A12.10</name>
</gene>
<organism evidence="6">
    <name type="scientific">Caenorhabditis elegans</name>
    <dbReference type="NCBI Taxonomy" id="6239"/>
    <lineage>
        <taxon>Eukaryota</taxon>
        <taxon>Metazoa</taxon>
        <taxon>Ecdysozoa</taxon>
        <taxon>Nematoda</taxon>
        <taxon>Chromadorea</taxon>
        <taxon>Rhabditida</taxon>
        <taxon>Rhabditina</taxon>
        <taxon>Rhabditomorpha</taxon>
        <taxon>Rhabditoidea</taxon>
        <taxon>Rhabditidae</taxon>
        <taxon>Peloderinae</taxon>
        <taxon>Caenorhabditis</taxon>
    </lineage>
</organism>
<keyword id="KW-0158">Chromosome</keyword>
<keyword id="KW-0175">Coiled coil</keyword>
<keyword id="KW-0233">DNA recombination</keyword>
<keyword id="KW-0469">Meiosis</keyword>
<keyword id="KW-0479">Metal-binding</keyword>
<keyword id="KW-1185">Reference proteome</keyword>
<keyword id="KW-0862">Zinc</keyword>
<keyword id="KW-0863">Zinc-finger</keyword>
<evidence type="ECO:0000255" key="1"/>
<evidence type="ECO:0000255" key="2">
    <source>
        <dbReference type="PROSITE-ProRule" id="PRU00175"/>
    </source>
</evidence>
<evidence type="ECO:0000256" key="3">
    <source>
        <dbReference type="SAM" id="MobiDB-lite"/>
    </source>
</evidence>
<evidence type="ECO:0000269" key="4">
    <source>
    </source>
</evidence>
<evidence type="ECO:0000305" key="5"/>
<evidence type="ECO:0000312" key="6">
    <source>
        <dbReference type="Proteomes" id="UP000001940"/>
    </source>
</evidence>
<evidence type="ECO:0000312" key="7">
    <source>
        <dbReference type="WormBase" id="F55A12.10"/>
    </source>
</evidence>